<comment type="function">
    <text evidence="1">This protein binds specifically to 23S rRNA; its binding is stimulated by other ribosomal proteins, e.g. L4, L17, and L20. It is important during the early stages of 50S assembly. It makes multiple contacts with different domains of the 23S rRNA in the assembled 50S subunit and ribosome (By similarity).</text>
</comment>
<comment type="function">
    <text evidence="1">The globular domain of the protein is located near the polypeptide exit tunnel on the outside of the subunit, while an extended beta-hairpin is found that lines the wall of the exit tunnel in the center of the 70S ribosome.</text>
</comment>
<comment type="subunit">
    <text evidence="1">Part of the 50S ribosomal subunit.</text>
</comment>
<comment type="similarity">
    <text evidence="1">Belongs to the universal ribosomal protein uL22 family.</text>
</comment>
<dbReference type="EMBL" id="CP000821">
    <property type="protein sequence ID" value="ABV38916.1"/>
    <property type="molecule type" value="Genomic_DNA"/>
</dbReference>
<dbReference type="RefSeq" id="WP_012144645.1">
    <property type="nucleotide sequence ID" value="NC_009831.1"/>
</dbReference>
<dbReference type="SMR" id="A8G1E3"/>
<dbReference type="STRING" id="425104.Ssed_4312"/>
<dbReference type="KEGG" id="sse:Ssed_4312"/>
<dbReference type="eggNOG" id="COG0091">
    <property type="taxonomic scope" value="Bacteria"/>
</dbReference>
<dbReference type="HOGENOM" id="CLU_083987_3_3_6"/>
<dbReference type="OrthoDB" id="9805969at2"/>
<dbReference type="Proteomes" id="UP000002015">
    <property type="component" value="Chromosome"/>
</dbReference>
<dbReference type="GO" id="GO:0022625">
    <property type="term" value="C:cytosolic large ribosomal subunit"/>
    <property type="evidence" value="ECO:0007669"/>
    <property type="project" value="TreeGrafter"/>
</dbReference>
<dbReference type="GO" id="GO:0019843">
    <property type="term" value="F:rRNA binding"/>
    <property type="evidence" value="ECO:0007669"/>
    <property type="project" value="UniProtKB-UniRule"/>
</dbReference>
<dbReference type="GO" id="GO:0003735">
    <property type="term" value="F:structural constituent of ribosome"/>
    <property type="evidence" value="ECO:0007669"/>
    <property type="project" value="InterPro"/>
</dbReference>
<dbReference type="GO" id="GO:0006412">
    <property type="term" value="P:translation"/>
    <property type="evidence" value="ECO:0007669"/>
    <property type="project" value="UniProtKB-UniRule"/>
</dbReference>
<dbReference type="CDD" id="cd00336">
    <property type="entry name" value="Ribosomal_L22"/>
    <property type="match status" value="1"/>
</dbReference>
<dbReference type="FunFam" id="3.90.470.10:FF:000001">
    <property type="entry name" value="50S ribosomal protein L22"/>
    <property type="match status" value="1"/>
</dbReference>
<dbReference type="Gene3D" id="3.90.470.10">
    <property type="entry name" value="Ribosomal protein L22/L17"/>
    <property type="match status" value="1"/>
</dbReference>
<dbReference type="HAMAP" id="MF_01331_B">
    <property type="entry name" value="Ribosomal_uL22_B"/>
    <property type="match status" value="1"/>
</dbReference>
<dbReference type="InterPro" id="IPR001063">
    <property type="entry name" value="Ribosomal_uL22"/>
</dbReference>
<dbReference type="InterPro" id="IPR005727">
    <property type="entry name" value="Ribosomal_uL22_bac/chlpt-type"/>
</dbReference>
<dbReference type="InterPro" id="IPR047867">
    <property type="entry name" value="Ribosomal_uL22_bac/org-type"/>
</dbReference>
<dbReference type="InterPro" id="IPR018260">
    <property type="entry name" value="Ribosomal_uL22_CS"/>
</dbReference>
<dbReference type="InterPro" id="IPR036394">
    <property type="entry name" value="Ribosomal_uL22_sf"/>
</dbReference>
<dbReference type="NCBIfam" id="TIGR01044">
    <property type="entry name" value="rplV_bact"/>
    <property type="match status" value="1"/>
</dbReference>
<dbReference type="PANTHER" id="PTHR13501">
    <property type="entry name" value="CHLOROPLAST 50S RIBOSOMAL PROTEIN L22-RELATED"/>
    <property type="match status" value="1"/>
</dbReference>
<dbReference type="PANTHER" id="PTHR13501:SF8">
    <property type="entry name" value="LARGE RIBOSOMAL SUBUNIT PROTEIN UL22M"/>
    <property type="match status" value="1"/>
</dbReference>
<dbReference type="Pfam" id="PF00237">
    <property type="entry name" value="Ribosomal_L22"/>
    <property type="match status" value="1"/>
</dbReference>
<dbReference type="SUPFAM" id="SSF54843">
    <property type="entry name" value="Ribosomal protein L22"/>
    <property type="match status" value="1"/>
</dbReference>
<dbReference type="PROSITE" id="PS00464">
    <property type="entry name" value="RIBOSOMAL_L22"/>
    <property type="match status" value="1"/>
</dbReference>
<accession>A8G1E3</accession>
<name>RL22_SHESH</name>
<gene>
    <name evidence="1" type="primary">rplV</name>
    <name type="ordered locus">Ssed_4312</name>
</gene>
<proteinExistence type="inferred from homology"/>
<keyword id="KW-1185">Reference proteome</keyword>
<keyword id="KW-0687">Ribonucleoprotein</keyword>
<keyword id="KW-0689">Ribosomal protein</keyword>
<keyword id="KW-0694">RNA-binding</keyword>
<keyword id="KW-0699">rRNA-binding</keyword>
<sequence length="110" mass="12151">MEVLAKHRFARTSPQKCRLVADQIRGLPVAKALEILTFSPKKAAVLVKKVLDSAIANAEHNEGADIDELRVGAIMIDEGPTMKRIMPRAKGRADRIIKRTSHITVVVSDR</sequence>
<evidence type="ECO:0000255" key="1">
    <source>
        <dbReference type="HAMAP-Rule" id="MF_01331"/>
    </source>
</evidence>
<evidence type="ECO:0000305" key="2"/>
<protein>
    <recommendedName>
        <fullName evidence="1">Large ribosomal subunit protein uL22</fullName>
    </recommendedName>
    <alternativeName>
        <fullName evidence="2">50S ribosomal protein L22</fullName>
    </alternativeName>
</protein>
<organism>
    <name type="scientific">Shewanella sediminis (strain HAW-EB3)</name>
    <dbReference type="NCBI Taxonomy" id="425104"/>
    <lineage>
        <taxon>Bacteria</taxon>
        <taxon>Pseudomonadati</taxon>
        <taxon>Pseudomonadota</taxon>
        <taxon>Gammaproteobacteria</taxon>
        <taxon>Alteromonadales</taxon>
        <taxon>Shewanellaceae</taxon>
        <taxon>Shewanella</taxon>
    </lineage>
</organism>
<feature type="chain" id="PRO_1000086572" description="Large ribosomal subunit protein uL22">
    <location>
        <begin position="1"/>
        <end position="110"/>
    </location>
</feature>
<reference key="1">
    <citation type="submission" date="2007-08" db="EMBL/GenBank/DDBJ databases">
        <title>Complete sequence of Shewanella sediminis HAW-EB3.</title>
        <authorList>
            <consortium name="US DOE Joint Genome Institute"/>
            <person name="Copeland A."/>
            <person name="Lucas S."/>
            <person name="Lapidus A."/>
            <person name="Barry K."/>
            <person name="Glavina del Rio T."/>
            <person name="Dalin E."/>
            <person name="Tice H."/>
            <person name="Pitluck S."/>
            <person name="Chertkov O."/>
            <person name="Brettin T."/>
            <person name="Bruce D."/>
            <person name="Detter J.C."/>
            <person name="Han C."/>
            <person name="Schmutz J."/>
            <person name="Larimer F."/>
            <person name="Land M."/>
            <person name="Hauser L."/>
            <person name="Kyrpides N."/>
            <person name="Kim E."/>
            <person name="Zhao J.-S."/>
            <person name="Richardson P."/>
        </authorList>
    </citation>
    <scope>NUCLEOTIDE SEQUENCE [LARGE SCALE GENOMIC DNA]</scope>
    <source>
        <strain>HAW-EB3</strain>
    </source>
</reference>